<name>VPU_HV192</name>
<proteinExistence type="inferred from homology"/>
<sequence>MLELIGRIDYRLGVGALIVALIIVIIVWTIAYIEYRKLVRQRRIDWLVKRIKERAEDSGNESGGDTEELETMVDMGHLRLLDGNDL</sequence>
<dbReference type="EMBL" id="U52953">
    <property type="protein sequence ID" value="AAB61126.1"/>
    <property type="molecule type" value="Genomic_DNA"/>
</dbReference>
<dbReference type="Proteomes" id="UP000007686">
    <property type="component" value="Segment"/>
</dbReference>
<dbReference type="GO" id="GO:0033644">
    <property type="term" value="C:host cell membrane"/>
    <property type="evidence" value="ECO:0007669"/>
    <property type="project" value="UniProtKB-SubCell"/>
</dbReference>
<dbReference type="GO" id="GO:0016020">
    <property type="term" value="C:membrane"/>
    <property type="evidence" value="ECO:0007669"/>
    <property type="project" value="UniProtKB-UniRule"/>
</dbReference>
<dbReference type="GO" id="GO:0042609">
    <property type="term" value="F:CD4 receptor binding"/>
    <property type="evidence" value="ECO:0007669"/>
    <property type="project" value="UniProtKB-UniRule"/>
</dbReference>
<dbReference type="GO" id="GO:0005261">
    <property type="term" value="F:monoatomic cation channel activity"/>
    <property type="evidence" value="ECO:0007669"/>
    <property type="project" value="UniProtKB-UniRule"/>
</dbReference>
<dbReference type="GO" id="GO:0032801">
    <property type="term" value="P:receptor catabolic process"/>
    <property type="evidence" value="ECO:0007669"/>
    <property type="project" value="UniProtKB-UniRule"/>
</dbReference>
<dbReference type="GO" id="GO:0052170">
    <property type="term" value="P:symbiont-mediated suppression of host innate immune response"/>
    <property type="evidence" value="ECO:0007669"/>
    <property type="project" value="UniProtKB-KW"/>
</dbReference>
<dbReference type="GO" id="GO:0039502">
    <property type="term" value="P:symbiont-mediated suppression of host type I interferon-mediated signaling pathway"/>
    <property type="evidence" value="ECO:0007669"/>
    <property type="project" value="UniProtKB-UniRule"/>
</dbReference>
<dbReference type="GO" id="GO:0039587">
    <property type="term" value="P:symbiont-mediated-mediated suppression of host tetherin activity"/>
    <property type="evidence" value="ECO:0007669"/>
    <property type="project" value="UniProtKB-UniRule"/>
</dbReference>
<dbReference type="GO" id="GO:0019076">
    <property type="term" value="P:viral release from host cell"/>
    <property type="evidence" value="ECO:0007669"/>
    <property type="project" value="UniProtKB-UniRule"/>
</dbReference>
<dbReference type="Gene3D" id="1.10.195.10">
    <property type="entry name" value="HIV-1 VPU cytoplasmic domain"/>
    <property type="match status" value="1"/>
</dbReference>
<dbReference type="HAMAP" id="MF_04082">
    <property type="entry name" value="HIV_VPU"/>
    <property type="match status" value="1"/>
</dbReference>
<dbReference type="InterPro" id="IPR008187">
    <property type="entry name" value="Vpu"/>
</dbReference>
<dbReference type="InterPro" id="IPR009032">
    <property type="entry name" value="Vpu_cyt_dom_sf"/>
</dbReference>
<dbReference type="Pfam" id="PF00558">
    <property type="entry name" value="Vpu"/>
    <property type="match status" value="1"/>
</dbReference>
<dbReference type="SUPFAM" id="SSF57647">
    <property type="entry name" value="HIV-1 VPU cytoplasmic domain"/>
    <property type="match status" value="1"/>
</dbReference>
<evidence type="ECO:0000255" key="1">
    <source>
        <dbReference type="HAMAP-Rule" id="MF_04082"/>
    </source>
</evidence>
<comment type="function">
    <text evidence="1">Enhances virion budding, by targeting human CD4 and Tetherin/BST2 to proteasome degradation. Degradation of CD4 prevents any unwanted premature interactions between viral Env and its host receptor CD4 in the endoplasmic reticulum. Degradation of antiretroviral protein Tetherin/BST2 is important for virion budding, as BST2 tethers new viral particles to the host cell membrane. Mechanistically, Vpu bridges either CD4 or BST2 to BTRC, a substrate recognition subunit of the Skp1/Cullin/F-box protein E3 ubiquitin ligase, induces their ubiquitination and subsequent proteasomal degradation. The alteration of the E3 ligase specificity by Vpu seems to promote the degradation of host IKBKB, leading to NF-kappa-B down-regulation and subsequent apoptosis. Acts as a viroporin that forms an oligomeric ion channel in membranes. Modulates the host DNA repair mechanisms to promote degradation of nuclear viral cDNA in cells that are already productively infected in order to suppress immune sensing and proviral hyper-integration (superinfection). Manipulates PML-NBs and modulates SUMOylation of host BLM protein thereby enhancing its DNA-end processing activity toward viral unintegrated linear DNA. Also inhibits RAD52-mediated homologous repair of viral cDNA, preventing the generation of dead-end circular forms of single copies of the long terminal repeat and permitting sustained nucleolytic attack.</text>
</comment>
<comment type="activity regulation">
    <text evidence="1">Ion channel activity is inhibited by hexamethylene amiloride in vitro.</text>
</comment>
<comment type="subunit">
    <text evidence="1">Homopentamer. Interacts with host CD4 and BRTC; these interactions induce proteasomal degradation of CD4. Interacts with host BST2; this interaction leads to the degradation of host BST2. Interacts with host FBXW11. Interacts with host AP1M1; this interaction plays a role in the mistrafficking and subsequent degradation of host BST2. Interacts with host RANBP2; this interaction allows Vpu to down-regulate host BLM sumoylation.</text>
</comment>
<comment type="subcellular location">
    <subcellularLocation>
        <location evidence="1">Host membrane</location>
        <topology evidence="1">Single-pass type I membrane protein</topology>
    </subcellularLocation>
</comment>
<comment type="domain">
    <text evidence="1">The N-terminus and transmembrane domains are required for self-oligomerization and proper virion budding, whereas the cytoplasmic domain is required for CD4 degradation. The cytoplasmic domain is composed of 2 amphipathic alpha helix that form a U-shape.</text>
</comment>
<comment type="PTM">
    <text evidence="1">Phosphorylated by host CK2. This phosphorylation is necessary for interaction with human BTRC and degradation of CD4.</text>
</comment>
<comment type="miscellaneous">
    <text evidence="1">HIV-1 lineages are divided in three main groups, M (for Major), O (for Outlier), and N (for New, or Non-M, Non-O). The vast majority of strains found worldwide belong to the group M. Group O seems to be endemic to and largely confined to Cameroon and neighboring countries in West Central Africa, where these viruses represent a small minority of HIV-1 strains. The group N is represented by a limited number of isolates from Cameroonian persons. The group M is further subdivided in 9 clades or subtypes (A to D, F to H, J and K).</text>
</comment>
<comment type="similarity">
    <text evidence="1">Belongs to the HIV-1 VPU protein family.</text>
</comment>
<reference key="1">
    <citation type="journal article" date="1996" name="J. Virol.">
        <title>Molecular cloning and analysis of functional envelope genes from human immunodeficiency virus type 1 sequence subtypes A through G. The WHO and NIAID Networks for HIV Isolation and Characterization.</title>
        <authorList>
            <person name="Gao F."/>
            <person name="Morrison S.G."/>
            <person name="Robertson D.L."/>
            <person name="Thornton C.L."/>
            <person name="Craig S."/>
            <person name="Karlsson G."/>
            <person name="Sodroski J."/>
            <person name="Morgado M."/>
            <person name="Galvao-Castro B."/>
            <person name="von Briesen H."/>
            <person name="Beddows S."/>
            <person name="Weber J."/>
            <person name="Sharp P.M."/>
            <person name="Shaw G.M."/>
            <person name="Hahn B.H."/>
        </authorList>
    </citation>
    <scope>NUCLEOTIDE SEQUENCE [GENOMIC DNA]</scope>
</reference>
<organismHost>
    <name type="scientific">Homo sapiens</name>
    <name type="common">Human</name>
    <dbReference type="NCBI Taxonomy" id="9606"/>
</organismHost>
<gene>
    <name evidence="1" type="primary">vpu</name>
</gene>
<feature type="chain" id="PRO_0000244323" description="Protein Vpu">
    <location>
        <begin position="1"/>
        <end position="86"/>
    </location>
</feature>
<feature type="topological domain" description="Extracellular" evidence="1">
    <location>
        <begin position="1"/>
        <end position="12"/>
    </location>
</feature>
<feature type="transmembrane region" description="Helical" evidence="1">
    <location>
        <begin position="13"/>
        <end position="33"/>
    </location>
</feature>
<feature type="topological domain" description="Cytoplasmic" evidence="1">
    <location>
        <begin position="34"/>
        <end position="86"/>
    </location>
</feature>
<feature type="modified residue" description="Phosphoserine; by host CK2" evidence="1">
    <location>
        <position position="58"/>
    </location>
</feature>
<feature type="modified residue" description="Phosphoserine; by host CK2" evidence="1">
    <location>
        <position position="62"/>
    </location>
</feature>
<protein>
    <recommendedName>
        <fullName evidence="1">Protein Vpu</fullName>
    </recommendedName>
    <alternativeName>
        <fullName evidence="1">U ORF protein</fullName>
    </alternativeName>
    <alternativeName>
        <fullName evidence="1">Viral protein U</fullName>
    </alternativeName>
</protein>
<organism>
    <name type="scientific">Human immunodeficiency virus type 1 group M subtype C (isolate 92BR025)</name>
    <name type="common">HIV-1</name>
    <dbReference type="NCBI Taxonomy" id="388812"/>
    <lineage>
        <taxon>Viruses</taxon>
        <taxon>Riboviria</taxon>
        <taxon>Pararnavirae</taxon>
        <taxon>Artverviricota</taxon>
        <taxon>Revtraviricetes</taxon>
        <taxon>Ortervirales</taxon>
        <taxon>Retroviridae</taxon>
        <taxon>Orthoretrovirinae</taxon>
        <taxon>Lentivirus</taxon>
        <taxon>Human immunodeficiency virus type 1</taxon>
    </lineage>
</organism>
<accession>O12163</accession>
<keyword id="KW-0014">AIDS</keyword>
<keyword id="KW-0053">Apoptosis</keyword>
<keyword id="KW-1043">Host membrane</keyword>
<keyword id="KW-0945">Host-virus interaction</keyword>
<keyword id="KW-1090">Inhibition of host innate immune response by virus</keyword>
<keyword id="KW-1084">Inhibition of host tetherin by virus</keyword>
<keyword id="KW-0407">Ion channel</keyword>
<keyword id="KW-0406">Ion transport</keyword>
<keyword id="KW-0472">Membrane</keyword>
<keyword id="KW-0597">Phosphoprotein</keyword>
<keyword id="KW-1185">Reference proteome</keyword>
<keyword id="KW-0812">Transmembrane</keyword>
<keyword id="KW-1133">Transmembrane helix</keyword>
<keyword id="KW-0813">Transport</keyword>
<keyword id="KW-0899">Viral immunoevasion</keyword>